<reference key="1">
    <citation type="journal article" date="2008" name="PLoS ONE">
        <title>A recalibrated molecular clock and independent origins for the cholera pandemic clones.</title>
        <authorList>
            <person name="Feng L."/>
            <person name="Reeves P.R."/>
            <person name="Lan R."/>
            <person name="Ren Y."/>
            <person name="Gao C."/>
            <person name="Zhou Z."/>
            <person name="Ren Y."/>
            <person name="Cheng J."/>
            <person name="Wang W."/>
            <person name="Wang J."/>
            <person name="Qian W."/>
            <person name="Li D."/>
            <person name="Wang L."/>
        </authorList>
    </citation>
    <scope>NUCLEOTIDE SEQUENCE [LARGE SCALE GENOMIC DNA]</scope>
    <source>
        <strain>M66-2</strain>
    </source>
</reference>
<sequence>MAKQPTRARKRVRKQVADGVAHIHASFNNTIVTITDRQGNALAWATAGGSGFRGSRKSTPFAAQVAAERCAEMAKEYGLKNLEVMVKGPGPGRESTVRALNAAGFRITNIVDATPIPHNGCRPPKKRRV</sequence>
<name>RS11_VIBCM</name>
<feature type="chain" id="PRO_1000165580" description="Small ribosomal subunit protein uS11">
    <location>
        <begin position="1"/>
        <end position="129"/>
    </location>
</feature>
<keyword id="KW-0687">Ribonucleoprotein</keyword>
<keyword id="KW-0689">Ribosomal protein</keyword>
<keyword id="KW-0694">RNA-binding</keyword>
<keyword id="KW-0699">rRNA-binding</keyword>
<accession>C3LRN5</accession>
<proteinExistence type="inferred from homology"/>
<organism>
    <name type="scientific">Vibrio cholerae serotype O1 (strain M66-2)</name>
    <dbReference type="NCBI Taxonomy" id="579112"/>
    <lineage>
        <taxon>Bacteria</taxon>
        <taxon>Pseudomonadati</taxon>
        <taxon>Pseudomonadota</taxon>
        <taxon>Gammaproteobacteria</taxon>
        <taxon>Vibrionales</taxon>
        <taxon>Vibrionaceae</taxon>
        <taxon>Vibrio</taxon>
    </lineage>
</organism>
<protein>
    <recommendedName>
        <fullName evidence="1">Small ribosomal subunit protein uS11</fullName>
    </recommendedName>
    <alternativeName>
        <fullName evidence="2">30S ribosomal protein S11</fullName>
    </alternativeName>
</protein>
<comment type="function">
    <text evidence="1">Located on the platform of the 30S subunit, it bridges several disparate RNA helices of the 16S rRNA. Forms part of the Shine-Dalgarno cleft in the 70S ribosome.</text>
</comment>
<comment type="subunit">
    <text evidence="1">Part of the 30S ribosomal subunit. Interacts with proteins S7 and S18. Binds to IF-3.</text>
</comment>
<comment type="similarity">
    <text evidence="1">Belongs to the universal ribosomal protein uS11 family.</text>
</comment>
<evidence type="ECO:0000255" key="1">
    <source>
        <dbReference type="HAMAP-Rule" id="MF_01310"/>
    </source>
</evidence>
<evidence type="ECO:0000305" key="2"/>
<dbReference type="EMBL" id="CP001233">
    <property type="protein sequence ID" value="ACP06790.1"/>
    <property type="molecule type" value="Genomic_DNA"/>
</dbReference>
<dbReference type="RefSeq" id="WP_001118870.1">
    <property type="nucleotide sequence ID" value="NC_012578.1"/>
</dbReference>
<dbReference type="SMR" id="C3LRN5"/>
<dbReference type="GeneID" id="97171204"/>
<dbReference type="KEGG" id="vcm:VCM66_2493"/>
<dbReference type="HOGENOM" id="CLU_072439_5_0_6"/>
<dbReference type="Proteomes" id="UP000001217">
    <property type="component" value="Chromosome I"/>
</dbReference>
<dbReference type="GO" id="GO:1990904">
    <property type="term" value="C:ribonucleoprotein complex"/>
    <property type="evidence" value="ECO:0007669"/>
    <property type="project" value="UniProtKB-KW"/>
</dbReference>
<dbReference type="GO" id="GO:0005840">
    <property type="term" value="C:ribosome"/>
    <property type="evidence" value="ECO:0007669"/>
    <property type="project" value="UniProtKB-KW"/>
</dbReference>
<dbReference type="GO" id="GO:0019843">
    <property type="term" value="F:rRNA binding"/>
    <property type="evidence" value="ECO:0007669"/>
    <property type="project" value="UniProtKB-UniRule"/>
</dbReference>
<dbReference type="GO" id="GO:0003735">
    <property type="term" value="F:structural constituent of ribosome"/>
    <property type="evidence" value="ECO:0007669"/>
    <property type="project" value="InterPro"/>
</dbReference>
<dbReference type="GO" id="GO:0006412">
    <property type="term" value="P:translation"/>
    <property type="evidence" value="ECO:0007669"/>
    <property type="project" value="UniProtKB-UniRule"/>
</dbReference>
<dbReference type="FunFam" id="3.30.420.80:FF:000001">
    <property type="entry name" value="30S ribosomal protein S11"/>
    <property type="match status" value="1"/>
</dbReference>
<dbReference type="Gene3D" id="3.30.420.80">
    <property type="entry name" value="Ribosomal protein S11"/>
    <property type="match status" value="1"/>
</dbReference>
<dbReference type="HAMAP" id="MF_01310">
    <property type="entry name" value="Ribosomal_uS11"/>
    <property type="match status" value="1"/>
</dbReference>
<dbReference type="InterPro" id="IPR001971">
    <property type="entry name" value="Ribosomal_uS11"/>
</dbReference>
<dbReference type="InterPro" id="IPR019981">
    <property type="entry name" value="Ribosomal_uS11_bac-type"/>
</dbReference>
<dbReference type="InterPro" id="IPR018102">
    <property type="entry name" value="Ribosomal_uS11_CS"/>
</dbReference>
<dbReference type="InterPro" id="IPR036967">
    <property type="entry name" value="Ribosomal_uS11_sf"/>
</dbReference>
<dbReference type="NCBIfam" id="NF003698">
    <property type="entry name" value="PRK05309.1"/>
    <property type="match status" value="1"/>
</dbReference>
<dbReference type="NCBIfam" id="TIGR03632">
    <property type="entry name" value="uS11_bact"/>
    <property type="match status" value="1"/>
</dbReference>
<dbReference type="PANTHER" id="PTHR11759">
    <property type="entry name" value="40S RIBOSOMAL PROTEIN S14/30S RIBOSOMAL PROTEIN S11"/>
    <property type="match status" value="1"/>
</dbReference>
<dbReference type="Pfam" id="PF00411">
    <property type="entry name" value="Ribosomal_S11"/>
    <property type="match status" value="1"/>
</dbReference>
<dbReference type="PIRSF" id="PIRSF002131">
    <property type="entry name" value="Ribosomal_S11"/>
    <property type="match status" value="1"/>
</dbReference>
<dbReference type="SUPFAM" id="SSF53137">
    <property type="entry name" value="Translational machinery components"/>
    <property type="match status" value="1"/>
</dbReference>
<dbReference type="PROSITE" id="PS00054">
    <property type="entry name" value="RIBOSOMAL_S11"/>
    <property type="match status" value="1"/>
</dbReference>
<gene>
    <name evidence="1" type="primary">rpsK</name>
    <name type="ordered locus">VCM66_2493</name>
</gene>